<reference key="1">
    <citation type="journal article" date="2006" name="Nature">
        <title>Insights from the genome of the biotrophic fungal plant pathogen Ustilago maydis.</title>
        <authorList>
            <person name="Kaemper J."/>
            <person name="Kahmann R."/>
            <person name="Boelker M."/>
            <person name="Ma L.-J."/>
            <person name="Brefort T."/>
            <person name="Saville B.J."/>
            <person name="Banuett F."/>
            <person name="Kronstad J.W."/>
            <person name="Gold S.E."/>
            <person name="Mueller O."/>
            <person name="Perlin M.H."/>
            <person name="Woesten H.A.B."/>
            <person name="de Vries R."/>
            <person name="Ruiz-Herrera J."/>
            <person name="Reynaga-Pena C.G."/>
            <person name="Snetselaar K."/>
            <person name="McCann M."/>
            <person name="Perez-Martin J."/>
            <person name="Feldbruegge M."/>
            <person name="Basse C.W."/>
            <person name="Steinberg G."/>
            <person name="Ibeas J.I."/>
            <person name="Holloman W."/>
            <person name="Guzman P."/>
            <person name="Farman M.L."/>
            <person name="Stajich J.E."/>
            <person name="Sentandreu R."/>
            <person name="Gonzalez-Prieto J.M."/>
            <person name="Kennell J.C."/>
            <person name="Molina L."/>
            <person name="Schirawski J."/>
            <person name="Mendoza-Mendoza A."/>
            <person name="Greilinger D."/>
            <person name="Muench K."/>
            <person name="Roessel N."/>
            <person name="Scherer M."/>
            <person name="Vranes M."/>
            <person name="Ladendorf O."/>
            <person name="Vincon V."/>
            <person name="Fuchs U."/>
            <person name="Sandrock B."/>
            <person name="Meng S."/>
            <person name="Ho E.C.H."/>
            <person name="Cahill M.J."/>
            <person name="Boyce K.J."/>
            <person name="Klose J."/>
            <person name="Klosterman S.J."/>
            <person name="Deelstra H.J."/>
            <person name="Ortiz-Castellanos L."/>
            <person name="Li W."/>
            <person name="Sanchez-Alonso P."/>
            <person name="Schreier P.H."/>
            <person name="Haeuser-Hahn I."/>
            <person name="Vaupel M."/>
            <person name="Koopmann E."/>
            <person name="Friedrich G."/>
            <person name="Voss H."/>
            <person name="Schlueter T."/>
            <person name="Margolis J."/>
            <person name="Platt D."/>
            <person name="Swimmer C."/>
            <person name="Gnirke A."/>
            <person name="Chen F."/>
            <person name="Vysotskaia V."/>
            <person name="Mannhaupt G."/>
            <person name="Gueldener U."/>
            <person name="Muensterkoetter M."/>
            <person name="Haase D."/>
            <person name="Oesterheld M."/>
            <person name="Mewes H.-W."/>
            <person name="Mauceli E.W."/>
            <person name="DeCaprio D."/>
            <person name="Wade C.M."/>
            <person name="Butler J."/>
            <person name="Young S.K."/>
            <person name="Jaffe D.B."/>
            <person name="Calvo S.E."/>
            <person name="Nusbaum C."/>
            <person name="Galagan J.E."/>
            <person name="Birren B.W."/>
        </authorList>
    </citation>
    <scope>NUCLEOTIDE SEQUENCE [LARGE SCALE GENOMIC DNA]</scope>
    <source>
        <strain>DSM 14603 / FGSC 9021 / UM521</strain>
    </source>
</reference>
<reference key="2">
    <citation type="submission" date="2014-09" db="EMBL/GenBank/DDBJ databases">
        <authorList>
            <person name="Gueldener U."/>
            <person name="Muensterkoetter M."/>
            <person name="Walter M.C."/>
            <person name="Mannhaupt G."/>
            <person name="Kahmann R."/>
        </authorList>
    </citation>
    <scope>GENOME REANNOTATION</scope>
    <source>
        <strain>DSM 14603 / FGSC 9021 / UM521</strain>
    </source>
</reference>
<sequence>MDALEKSLCDFTGSTPLDQRFRSLFTIKGLAATSDQHMQRAISIISQAFSDDSALLKHELAYVLGQLEDARALPTLKKILQDLSQDAMVRHEAAEAMGAISDPSVLPILEQYRSDSDVSVRETCELAISKISFDNSEEGQALKQSKAQAKLAEEQSGLGGVESAFKPIDPAPAMTPAASKEAARSQADGVRYDASHVPLFQSTLLDTNLSLFERYRAMFALRNVAHGGGDGAIQAVLALARGLQDGSALFRHEICFVFGELCHPASIPSMLHVLNDTKEHEMVRHEAAEALGGIVEEGEHAANDSANDYTRVLDTLNKWAHDMDAPRVVRESCIVALDELAYNNDPTQFHRIETSTPVAA</sequence>
<accession>Q4PHU4</accession>
<accession>A0A0D1EC11</accession>
<protein>
    <recommendedName>
        <fullName evidence="1">Deoxyhypusine hydroxylase</fullName>
        <shortName evidence="1">DOHH</shortName>
        <ecNumber evidence="1">1.14.99.29</ecNumber>
    </recommendedName>
    <alternativeName>
        <fullName evidence="1">Deoxyhypusine dioxygenase</fullName>
    </alternativeName>
    <alternativeName>
        <fullName evidence="1">Deoxyhypusine monooxygenase</fullName>
    </alternativeName>
</protein>
<keyword id="KW-0963">Cytoplasm</keyword>
<keyword id="KW-0386">Hypusine biosynthesis</keyword>
<keyword id="KW-0408">Iron</keyword>
<keyword id="KW-0479">Metal-binding</keyword>
<keyword id="KW-0503">Monooxygenase</keyword>
<keyword id="KW-0539">Nucleus</keyword>
<keyword id="KW-0560">Oxidoreductase</keyword>
<keyword id="KW-1185">Reference proteome</keyword>
<keyword id="KW-0677">Repeat</keyword>
<dbReference type="EC" id="1.14.99.29" evidence="1"/>
<dbReference type="EMBL" id="CM003140">
    <property type="protein sequence ID" value="KIS71890.1"/>
    <property type="molecule type" value="Genomic_DNA"/>
</dbReference>
<dbReference type="RefSeq" id="XP_011386225.1">
    <property type="nucleotide sequence ID" value="XM_011387923.1"/>
</dbReference>
<dbReference type="SMR" id="Q4PHU4"/>
<dbReference type="FunCoup" id="Q4PHU4">
    <property type="interactions" value="325"/>
</dbReference>
<dbReference type="STRING" id="237631.Q4PHU4"/>
<dbReference type="EnsemblFungi" id="KIS71890">
    <property type="protein sequence ID" value="KIS71890"/>
    <property type="gene ID" value="UMAG_00319"/>
</dbReference>
<dbReference type="GeneID" id="23561658"/>
<dbReference type="KEGG" id="uma:UMAG_00319"/>
<dbReference type="VEuPathDB" id="FungiDB:UMAG_00319"/>
<dbReference type="eggNOG" id="KOG0567">
    <property type="taxonomic scope" value="Eukaryota"/>
</dbReference>
<dbReference type="HOGENOM" id="CLU_053974_0_0_1"/>
<dbReference type="InParanoid" id="Q4PHU4"/>
<dbReference type="OMA" id="LQEPCSI"/>
<dbReference type="OrthoDB" id="421002at2759"/>
<dbReference type="UniPathway" id="UPA00354"/>
<dbReference type="Proteomes" id="UP000000561">
    <property type="component" value="Chromosome 1"/>
</dbReference>
<dbReference type="GO" id="GO:0005737">
    <property type="term" value="C:cytoplasm"/>
    <property type="evidence" value="ECO:0007669"/>
    <property type="project" value="UniProtKB-SubCell"/>
</dbReference>
<dbReference type="GO" id="GO:0005634">
    <property type="term" value="C:nucleus"/>
    <property type="evidence" value="ECO:0007669"/>
    <property type="project" value="UniProtKB-SubCell"/>
</dbReference>
<dbReference type="GO" id="GO:0019135">
    <property type="term" value="F:deoxyhypusine monooxygenase activity"/>
    <property type="evidence" value="ECO:0000318"/>
    <property type="project" value="GO_Central"/>
</dbReference>
<dbReference type="GO" id="GO:0046872">
    <property type="term" value="F:metal ion binding"/>
    <property type="evidence" value="ECO:0007669"/>
    <property type="project" value="UniProtKB-KW"/>
</dbReference>
<dbReference type="Gene3D" id="1.25.10.10">
    <property type="entry name" value="Leucine-rich Repeat Variant"/>
    <property type="match status" value="2"/>
</dbReference>
<dbReference type="HAMAP" id="MF_03101">
    <property type="entry name" value="Deoxyhypusine_hydroxylase"/>
    <property type="match status" value="1"/>
</dbReference>
<dbReference type="InterPro" id="IPR011989">
    <property type="entry name" value="ARM-like"/>
</dbReference>
<dbReference type="InterPro" id="IPR016024">
    <property type="entry name" value="ARM-type_fold"/>
</dbReference>
<dbReference type="InterPro" id="IPR027517">
    <property type="entry name" value="Deoxyhypusine_hydroxylase"/>
</dbReference>
<dbReference type="InterPro" id="IPR004155">
    <property type="entry name" value="PBS_lyase_HEAT"/>
</dbReference>
<dbReference type="PANTHER" id="PTHR12697:SF5">
    <property type="entry name" value="DEOXYHYPUSINE HYDROXYLASE"/>
    <property type="match status" value="1"/>
</dbReference>
<dbReference type="PANTHER" id="PTHR12697">
    <property type="entry name" value="PBS LYASE HEAT-LIKE PROTEIN"/>
    <property type="match status" value="1"/>
</dbReference>
<dbReference type="Pfam" id="PF13646">
    <property type="entry name" value="HEAT_2"/>
    <property type="match status" value="2"/>
</dbReference>
<dbReference type="SMART" id="SM00567">
    <property type="entry name" value="EZ_HEAT"/>
    <property type="match status" value="5"/>
</dbReference>
<dbReference type="SUPFAM" id="SSF48371">
    <property type="entry name" value="ARM repeat"/>
    <property type="match status" value="1"/>
</dbReference>
<evidence type="ECO:0000255" key="1">
    <source>
        <dbReference type="HAMAP-Rule" id="MF_03101"/>
    </source>
</evidence>
<name>DOHH_MYCMD</name>
<comment type="function">
    <text evidence="1">Catalyzes the hydroxylation of the N(6)-(4-aminobutyl)-L-lysine intermediate to form hypusine, an essential post-translational modification only found in mature eIF-5A factor.</text>
</comment>
<comment type="catalytic activity">
    <reaction evidence="1">
        <text>[eIF5A protein]-deoxyhypusine + AH2 + O2 = [eIF5A protein]-hypusine + A + H2O</text>
        <dbReference type="Rhea" id="RHEA:14101"/>
        <dbReference type="Rhea" id="RHEA-COMP:10144"/>
        <dbReference type="Rhea" id="RHEA-COMP:12592"/>
        <dbReference type="ChEBI" id="CHEBI:13193"/>
        <dbReference type="ChEBI" id="CHEBI:15377"/>
        <dbReference type="ChEBI" id="CHEBI:15379"/>
        <dbReference type="ChEBI" id="CHEBI:17499"/>
        <dbReference type="ChEBI" id="CHEBI:82657"/>
        <dbReference type="ChEBI" id="CHEBI:91175"/>
        <dbReference type="EC" id="1.14.99.29"/>
    </reaction>
</comment>
<comment type="cofactor">
    <cofactor evidence="1">
        <name>Fe(2+)</name>
        <dbReference type="ChEBI" id="CHEBI:29033"/>
    </cofactor>
    <text evidence="1">Binds 2 Fe(2+) ions per subunit.</text>
</comment>
<comment type="pathway">
    <text evidence="1">Protein modification; eIF5A hypusination.</text>
</comment>
<comment type="subcellular location">
    <subcellularLocation>
        <location evidence="1">Cytoplasm</location>
    </subcellularLocation>
    <subcellularLocation>
        <location evidence="1">Nucleus</location>
    </subcellularLocation>
</comment>
<comment type="similarity">
    <text evidence="1">Belongs to the deoxyhypusine hydroxylase family.</text>
</comment>
<gene>
    <name evidence="1" type="primary">LIA1</name>
    <name type="ORF">UMAG_00319</name>
</gene>
<proteinExistence type="inferred from homology"/>
<feature type="chain" id="PRO_0000283673" description="Deoxyhypusine hydroxylase">
    <location>
        <begin position="1"/>
        <end position="360"/>
    </location>
</feature>
<feature type="repeat" description="HEAT-like PBS-type 1">
    <location>
        <begin position="56"/>
        <end position="82"/>
    </location>
</feature>
<feature type="repeat" description="HEAT-like PBS-type 2">
    <location>
        <begin position="89"/>
        <end position="115"/>
    </location>
</feature>
<feature type="repeat" description="HEAT-like PBS-type 3">
    <location>
        <begin position="213"/>
        <end position="245"/>
    </location>
</feature>
<feature type="binding site" evidence="1">
    <location>
        <position position="58"/>
    </location>
    <ligand>
        <name>Fe cation</name>
        <dbReference type="ChEBI" id="CHEBI:24875"/>
        <label>1</label>
    </ligand>
</feature>
<feature type="binding site" evidence="1">
    <location>
        <position position="59"/>
    </location>
    <ligand>
        <name>Fe cation</name>
        <dbReference type="ChEBI" id="CHEBI:24875"/>
        <label>1</label>
    </ligand>
</feature>
<feature type="binding site" evidence="1">
    <location>
        <position position="91"/>
    </location>
    <ligand>
        <name>Fe cation</name>
        <dbReference type="ChEBI" id="CHEBI:24875"/>
        <label>1</label>
    </ligand>
</feature>
<feature type="binding site" evidence="1">
    <location>
        <position position="92"/>
    </location>
    <ligand>
        <name>Fe cation</name>
        <dbReference type="ChEBI" id="CHEBI:24875"/>
        <label>1</label>
    </ligand>
</feature>
<feature type="binding site" evidence="1">
    <location>
        <position position="252"/>
    </location>
    <ligand>
        <name>Fe cation</name>
        <dbReference type="ChEBI" id="CHEBI:24875"/>
        <label>2</label>
    </ligand>
</feature>
<feature type="binding site" evidence="1">
    <location>
        <position position="253"/>
    </location>
    <ligand>
        <name>Fe cation</name>
        <dbReference type="ChEBI" id="CHEBI:24875"/>
        <label>2</label>
    </ligand>
</feature>
<feature type="binding site" evidence="1">
    <location>
        <position position="285"/>
    </location>
    <ligand>
        <name>Fe cation</name>
        <dbReference type="ChEBI" id="CHEBI:24875"/>
        <label>2</label>
    </ligand>
</feature>
<feature type="binding site" evidence="1">
    <location>
        <position position="286"/>
    </location>
    <ligand>
        <name>Fe cation</name>
        <dbReference type="ChEBI" id="CHEBI:24875"/>
        <label>2</label>
    </ligand>
</feature>
<organism>
    <name type="scientific">Mycosarcoma maydis</name>
    <name type="common">Corn smut fungus</name>
    <name type="synonym">Ustilago maydis</name>
    <dbReference type="NCBI Taxonomy" id="5270"/>
    <lineage>
        <taxon>Eukaryota</taxon>
        <taxon>Fungi</taxon>
        <taxon>Dikarya</taxon>
        <taxon>Basidiomycota</taxon>
        <taxon>Ustilaginomycotina</taxon>
        <taxon>Ustilaginomycetes</taxon>
        <taxon>Ustilaginales</taxon>
        <taxon>Ustilaginaceae</taxon>
        <taxon>Mycosarcoma</taxon>
    </lineage>
</organism>